<proteinExistence type="inferred from homology"/>
<feature type="chain" id="PRO_1000051018" description="Small ribosomal subunit protein uS19">
    <location>
        <begin position="1"/>
        <end position="92"/>
    </location>
</feature>
<protein>
    <recommendedName>
        <fullName evidence="1">Small ribosomal subunit protein uS19</fullName>
    </recommendedName>
    <alternativeName>
        <fullName evidence="2">30S ribosomal protein S19</fullName>
    </alternativeName>
</protein>
<organism>
    <name type="scientific">Brucella ovis (strain ATCC 25840 / 63/290 / NCTC 10512)</name>
    <dbReference type="NCBI Taxonomy" id="444178"/>
    <lineage>
        <taxon>Bacteria</taxon>
        <taxon>Pseudomonadati</taxon>
        <taxon>Pseudomonadota</taxon>
        <taxon>Alphaproteobacteria</taxon>
        <taxon>Hyphomicrobiales</taxon>
        <taxon>Brucellaceae</taxon>
        <taxon>Brucella/Ochrobactrum group</taxon>
        <taxon>Brucella</taxon>
    </lineage>
</organism>
<evidence type="ECO:0000255" key="1">
    <source>
        <dbReference type="HAMAP-Rule" id="MF_00531"/>
    </source>
</evidence>
<evidence type="ECO:0000305" key="2"/>
<sequence>MARSVWKGPFVDGYLLKKAEKVREGGRNEVIKMWSRRSTILPQFVGLTFGVYNGSKHVPVSVSEEMVGHKFGEFAPTRTYYGHGADKKAKRK</sequence>
<dbReference type="EMBL" id="CP000708">
    <property type="protein sequence ID" value="ABQ61141.1"/>
    <property type="molecule type" value="Genomic_DNA"/>
</dbReference>
<dbReference type="RefSeq" id="WP_006012787.1">
    <property type="nucleotide sequence ID" value="NC_009505.1"/>
</dbReference>
<dbReference type="SMR" id="A5VR02"/>
<dbReference type="GeneID" id="45124597"/>
<dbReference type="KEGG" id="bov:BOV_1192"/>
<dbReference type="HOGENOM" id="CLU_144911_0_1_5"/>
<dbReference type="Proteomes" id="UP000006383">
    <property type="component" value="Chromosome I"/>
</dbReference>
<dbReference type="GO" id="GO:0005737">
    <property type="term" value="C:cytoplasm"/>
    <property type="evidence" value="ECO:0007669"/>
    <property type="project" value="UniProtKB-ARBA"/>
</dbReference>
<dbReference type="GO" id="GO:0015935">
    <property type="term" value="C:small ribosomal subunit"/>
    <property type="evidence" value="ECO:0007669"/>
    <property type="project" value="InterPro"/>
</dbReference>
<dbReference type="GO" id="GO:0019843">
    <property type="term" value="F:rRNA binding"/>
    <property type="evidence" value="ECO:0007669"/>
    <property type="project" value="UniProtKB-UniRule"/>
</dbReference>
<dbReference type="GO" id="GO:0003735">
    <property type="term" value="F:structural constituent of ribosome"/>
    <property type="evidence" value="ECO:0007669"/>
    <property type="project" value="InterPro"/>
</dbReference>
<dbReference type="GO" id="GO:0000028">
    <property type="term" value="P:ribosomal small subunit assembly"/>
    <property type="evidence" value="ECO:0007669"/>
    <property type="project" value="TreeGrafter"/>
</dbReference>
<dbReference type="GO" id="GO:0006412">
    <property type="term" value="P:translation"/>
    <property type="evidence" value="ECO:0007669"/>
    <property type="project" value="UniProtKB-UniRule"/>
</dbReference>
<dbReference type="FunFam" id="3.30.860.10:FF:000001">
    <property type="entry name" value="30S ribosomal protein S19"/>
    <property type="match status" value="1"/>
</dbReference>
<dbReference type="Gene3D" id="3.30.860.10">
    <property type="entry name" value="30s Ribosomal Protein S19, Chain A"/>
    <property type="match status" value="1"/>
</dbReference>
<dbReference type="HAMAP" id="MF_00531">
    <property type="entry name" value="Ribosomal_uS19"/>
    <property type="match status" value="1"/>
</dbReference>
<dbReference type="InterPro" id="IPR002222">
    <property type="entry name" value="Ribosomal_uS19"/>
</dbReference>
<dbReference type="InterPro" id="IPR005732">
    <property type="entry name" value="Ribosomal_uS19_bac-type"/>
</dbReference>
<dbReference type="InterPro" id="IPR020934">
    <property type="entry name" value="Ribosomal_uS19_CS"/>
</dbReference>
<dbReference type="InterPro" id="IPR023575">
    <property type="entry name" value="Ribosomal_uS19_SF"/>
</dbReference>
<dbReference type="NCBIfam" id="TIGR01050">
    <property type="entry name" value="rpsS_bact"/>
    <property type="match status" value="1"/>
</dbReference>
<dbReference type="PANTHER" id="PTHR11880">
    <property type="entry name" value="RIBOSOMAL PROTEIN S19P FAMILY MEMBER"/>
    <property type="match status" value="1"/>
</dbReference>
<dbReference type="PANTHER" id="PTHR11880:SF8">
    <property type="entry name" value="SMALL RIBOSOMAL SUBUNIT PROTEIN US19M"/>
    <property type="match status" value="1"/>
</dbReference>
<dbReference type="Pfam" id="PF00203">
    <property type="entry name" value="Ribosomal_S19"/>
    <property type="match status" value="1"/>
</dbReference>
<dbReference type="PIRSF" id="PIRSF002144">
    <property type="entry name" value="Ribosomal_S19"/>
    <property type="match status" value="1"/>
</dbReference>
<dbReference type="PRINTS" id="PR00975">
    <property type="entry name" value="RIBOSOMALS19"/>
</dbReference>
<dbReference type="SUPFAM" id="SSF54570">
    <property type="entry name" value="Ribosomal protein S19"/>
    <property type="match status" value="1"/>
</dbReference>
<dbReference type="PROSITE" id="PS00323">
    <property type="entry name" value="RIBOSOMAL_S19"/>
    <property type="match status" value="1"/>
</dbReference>
<keyword id="KW-0687">Ribonucleoprotein</keyword>
<keyword id="KW-0689">Ribosomal protein</keyword>
<keyword id="KW-0694">RNA-binding</keyword>
<keyword id="KW-0699">rRNA-binding</keyword>
<accession>A5VR02</accession>
<comment type="function">
    <text evidence="1">Protein S19 forms a complex with S13 that binds strongly to the 16S ribosomal RNA.</text>
</comment>
<comment type="similarity">
    <text evidence="1">Belongs to the universal ribosomal protein uS19 family.</text>
</comment>
<gene>
    <name evidence="1" type="primary">rpsS</name>
    <name type="ordered locus">BOV_1192</name>
</gene>
<reference key="1">
    <citation type="journal article" date="2009" name="PLoS ONE">
        <title>Genome degradation in Brucella ovis corresponds with narrowing of its host range and tissue tropism.</title>
        <authorList>
            <person name="Tsolis R.M."/>
            <person name="Seshadri R."/>
            <person name="Santos R.L."/>
            <person name="Sangari F.J."/>
            <person name="Lobo J.M."/>
            <person name="de Jong M.F."/>
            <person name="Ren Q."/>
            <person name="Myers G."/>
            <person name="Brinkac L.M."/>
            <person name="Nelson W.C."/>
            <person name="Deboy R.T."/>
            <person name="Angiuoli S."/>
            <person name="Khouri H."/>
            <person name="Dimitrov G."/>
            <person name="Robinson J.R."/>
            <person name="Mulligan S."/>
            <person name="Walker R.L."/>
            <person name="Elzer P.E."/>
            <person name="Hassan K.A."/>
            <person name="Paulsen I.T."/>
        </authorList>
    </citation>
    <scope>NUCLEOTIDE SEQUENCE [LARGE SCALE GENOMIC DNA]</scope>
    <source>
        <strain>ATCC 25840 / 63/290 / NCTC 10512</strain>
    </source>
</reference>
<name>RS19_BRUO2</name>